<accession>Q9PDI7</accession>
<keyword id="KW-0227">DNA damage</keyword>
<keyword id="KW-0233">DNA recombination</keyword>
<keyword id="KW-0234">DNA repair</keyword>
<keyword id="KW-0235">DNA replication</keyword>
<keyword id="KW-0238">DNA-binding</keyword>
<proteinExistence type="inferred from homology"/>
<gene>
    <name type="primary">ssb2</name>
    <name type="ordered locus">XF_1392</name>
</gene>
<organism>
    <name type="scientific">Xylella fastidiosa (strain 9a5c)</name>
    <dbReference type="NCBI Taxonomy" id="160492"/>
    <lineage>
        <taxon>Bacteria</taxon>
        <taxon>Pseudomonadati</taxon>
        <taxon>Pseudomonadota</taxon>
        <taxon>Gammaproteobacteria</taxon>
        <taxon>Lysobacterales</taxon>
        <taxon>Lysobacteraceae</taxon>
        <taxon>Xylella</taxon>
    </lineage>
</organism>
<reference key="1">
    <citation type="journal article" date="2000" name="Nature">
        <title>The genome sequence of the plant pathogen Xylella fastidiosa.</title>
        <authorList>
            <person name="Simpson A.J.G."/>
            <person name="Reinach F.C."/>
            <person name="Arruda P."/>
            <person name="Abreu F.A."/>
            <person name="Acencio M."/>
            <person name="Alvarenga R."/>
            <person name="Alves L.M.C."/>
            <person name="Araya J.E."/>
            <person name="Baia G.S."/>
            <person name="Baptista C.S."/>
            <person name="Barros M.H."/>
            <person name="Bonaccorsi E.D."/>
            <person name="Bordin S."/>
            <person name="Bove J.M."/>
            <person name="Briones M.R.S."/>
            <person name="Bueno M.R.P."/>
            <person name="Camargo A.A."/>
            <person name="Camargo L.E.A."/>
            <person name="Carraro D.M."/>
            <person name="Carrer H."/>
            <person name="Colauto N.B."/>
            <person name="Colombo C."/>
            <person name="Costa F.F."/>
            <person name="Costa M.C.R."/>
            <person name="Costa-Neto C.M."/>
            <person name="Coutinho L.L."/>
            <person name="Cristofani M."/>
            <person name="Dias-Neto E."/>
            <person name="Docena C."/>
            <person name="El-Dorry H."/>
            <person name="Facincani A.P."/>
            <person name="Ferreira A.J.S."/>
            <person name="Ferreira V.C.A."/>
            <person name="Ferro J.A."/>
            <person name="Fraga J.S."/>
            <person name="Franca S.C."/>
            <person name="Franco M.C."/>
            <person name="Frohme M."/>
            <person name="Furlan L.R."/>
            <person name="Garnier M."/>
            <person name="Goldman G.H."/>
            <person name="Goldman M.H.S."/>
            <person name="Gomes S.L."/>
            <person name="Gruber A."/>
            <person name="Ho P.L."/>
            <person name="Hoheisel J.D."/>
            <person name="Junqueira M.L."/>
            <person name="Kemper E.L."/>
            <person name="Kitajima J.P."/>
            <person name="Krieger J.E."/>
            <person name="Kuramae E.E."/>
            <person name="Laigret F."/>
            <person name="Lambais M.R."/>
            <person name="Leite L.C.C."/>
            <person name="Lemos E.G.M."/>
            <person name="Lemos M.V.F."/>
            <person name="Lopes S.A."/>
            <person name="Lopes C.R."/>
            <person name="Machado J.A."/>
            <person name="Machado M.A."/>
            <person name="Madeira A.M.B.N."/>
            <person name="Madeira H.M.F."/>
            <person name="Marino C.L."/>
            <person name="Marques M.V."/>
            <person name="Martins E.A.L."/>
            <person name="Martins E.M.F."/>
            <person name="Matsukuma A.Y."/>
            <person name="Menck C.F.M."/>
            <person name="Miracca E.C."/>
            <person name="Miyaki C.Y."/>
            <person name="Monteiro-Vitorello C.B."/>
            <person name="Moon D.H."/>
            <person name="Nagai M.A."/>
            <person name="Nascimento A.L.T.O."/>
            <person name="Netto L.E.S."/>
            <person name="Nhani A. Jr."/>
            <person name="Nobrega F.G."/>
            <person name="Nunes L.R."/>
            <person name="Oliveira M.A."/>
            <person name="de Oliveira M.C."/>
            <person name="de Oliveira R.C."/>
            <person name="Palmieri D.A."/>
            <person name="Paris A."/>
            <person name="Peixoto B.R."/>
            <person name="Pereira G.A.G."/>
            <person name="Pereira H.A. Jr."/>
            <person name="Pesquero J.B."/>
            <person name="Quaggio R.B."/>
            <person name="Roberto P.G."/>
            <person name="Rodrigues V."/>
            <person name="de Rosa A.J.M."/>
            <person name="de Rosa V.E. Jr."/>
            <person name="de Sa R.G."/>
            <person name="Santelli R.V."/>
            <person name="Sawasaki H.E."/>
            <person name="da Silva A.C.R."/>
            <person name="da Silva A.M."/>
            <person name="da Silva F.R."/>
            <person name="Silva W.A. Jr."/>
            <person name="da Silveira J.F."/>
            <person name="Silvestri M.L.Z."/>
            <person name="Siqueira W.J."/>
            <person name="de Souza A.A."/>
            <person name="de Souza A.P."/>
            <person name="Terenzi M.F."/>
            <person name="Truffi D."/>
            <person name="Tsai S.M."/>
            <person name="Tsuhako M.H."/>
            <person name="Vallada H."/>
            <person name="Van Sluys M.A."/>
            <person name="Verjovski-Almeida S."/>
            <person name="Vettore A.L."/>
            <person name="Zago M.A."/>
            <person name="Zatz M."/>
            <person name="Meidanis J."/>
            <person name="Setubal J.C."/>
        </authorList>
    </citation>
    <scope>NUCLEOTIDE SEQUENCE [LARGE SCALE GENOMIC DNA]</scope>
    <source>
        <strain>9a5c</strain>
    </source>
</reference>
<sequence>MARGINKVILVGNLGNDPDIKYTQGGMTITTISLATTSVRKDKEGNTQERTEWHRVKFFGKLGEIAGEYLRKGSQCYIEGSIRYDKFTGQDGQERYVTEIVADEMQMLGGRSDGGGMGGGGERPQRQTSQRQDYAPRRQARQPSQSPQSSPPPMDDFADDDIPF</sequence>
<protein>
    <recommendedName>
        <fullName evidence="1">Single-stranded DNA-binding protein 2</fullName>
        <shortName evidence="1">SSB 2</shortName>
    </recommendedName>
</protein>
<dbReference type="EMBL" id="AE003849">
    <property type="protein sequence ID" value="AAF84201.1"/>
    <property type="molecule type" value="Genomic_DNA"/>
</dbReference>
<dbReference type="PIR" id="B82688">
    <property type="entry name" value="B82688"/>
</dbReference>
<dbReference type="RefSeq" id="WP_004083791.1">
    <property type="nucleotide sequence ID" value="NC_002488.3"/>
</dbReference>
<dbReference type="SMR" id="Q9PDI7"/>
<dbReference type="STRING" id="160492.XF_1392"/>
<dbReference type="KEGG" id="xfa:XF_1392"/>
<dbReference type="eggNOG" id="COG0629">
    <property type="taxonomic scope" value="Bacteria"/>
</dbReference>
<dbReference type="HOGENOM" id="CLU_078758_0_2_6"/>
<dbReference type="Proteomes" id="UP000000812">
    <property type="component" value="Chromosome"/>
</dbReference>
<dbReference type="GO" id="GO:0009295">
    <property type="term" value="C:nucleoid"/>
    <property type="evidence" value="ECO:0007669"/>
    <property type="project" value="TreeGrafter"/>
</dbReference>
<dbReference type="GO" id="GO:0003697">
    <property type="term" value="F:single-stranded DNA binding"/>
    <property type="evidence" value="ECO:0007669"/>
    <property type="project" value="UniProtKB-UniRule"/>
</dbReference>
<dbReference type="GO" id="GO:0006310">
    <property type="term" value="P:DNA recombination"/>
    <property type="evidence" value="ECO:0007669"/>
    <property type="project" value="UniProtKB-UniRule"/>
</dbReference>
<dbReference type="GO" id="GO:0006281">
    <property type="term" value="P:DNA repair"/>
    <property type="evidence" value="ECO:0007669"/>
    <property type="project" value="UniProtKB-UniRule"/>
</dbReference>
<dbReference type="GO" id="GO:0006260">
    <property type="term" value="P:DNA replication"/>
    <property type="evidence" value="ECO:0007669"/>
    <property type="project" value="UniProtKB-UniRule"/>
</dbReference>
<dbReference type="CDD" id="cd04496">
    <property type="entry name" value="SSB_OBF"/>
    <property type="match status" value="1"/>
</dbReference>
<dbReference type="Gene3D" id="2.40.50.140">
    <property type="entry name" value="Nucleic acid-binding proteins"/>
    <property type="match status" value="1"/>
</dbReference>
<dbReference type="HAMAP" id="MF_00984">
    <property type="entry name" value="SSB"/>
    <property type="match status" value="1"/>
</dbReference>
<dbReference type="InterPro" id="IPR012340">
    <property type="entry name" value="NA-bd_OB-fold"/>
</dbReference>
<dbReference type="InterPro" id="IPR000424">
    <property type="entry name" value="Primosome_PriB/ssb"/>
</dbReference>
<dbReference type="InterPro" id="IPR011344">
    <property type="entry name" value="ssDNA-bd"/>
</dbReference>
<dbReference type="NCBIfam" id="NF006445">
    <property type="entry name" value="PRK08763.1"/>
    <property type="match status" value="1"/>
</dbReference>
<dbReference type="NCBIfam" id="TIGR00621">
    <property type="entry name" value="ssb"/>
    <property type="match status" value="1"/>
</dbReference>
<dbReference type="PANTHER" id="PTHR10302">
    <property type="entry name" value="SINGLE-STRANDED DNA-BINDING PROTEIN"/>
    <property type="match status" value="1"/>
</dbReference>
<dbReference type="PANTHER" id="PTHR10302:SF27">
    <property type="entry name" value="SINGLE-STRANDED DNA-BINDING PROTEIN"/>
    <property type="match status" value="1"/>
</dbReference>
<dbReference type="Pfam" id="PF00436">
    <property type="entry name" value="SSB"/>
    <property type="match status" value="1"/>
</dbReference>
<dbReference type="PIRSF" id="PIRSF002070">
    <property type="entry name" value="SSB"/>
    <property type="match status" value="1"/>
</dbReference>
<dbReference type="SUPFAM" id="SSF50249">
    <property type="entry name" value="Nucleic acid-binding proteins"/>
    <property type="match status" value="1"/>
</dbReference>
<dbReference type="PROSITE" id="PS50935">
    <property type="entry name" value="SSB"/>
    <property type="match status" value="1"/>
</dbReference>
<feature type="chain" id="PRO_0000096144" description="Single-stranded DNA-binding protein 2">
    <location>
        <begin position="1"/>
        <end position="164"/>
    </location>
</feature>
<feature type="domain" description="SSB" evidence="1">
    <location>
        <begin position="5"/>
        <end position="109"/>
    </location>
</feature>
<feature type="region of interest" description="Disordered" evidence="2">
    <location>
        <begin position="105"/>
        <end position="164"/>
    </location>
</feature>
<feature type="short sequence motif" description="Important for interaction with partner proteins" evidence="1">
    <location>
        <begin position="159"/>
        <end position="164"/>
    </location>
</feature>
<feature type="compositionally biased region" description="Gly residues" evidence="2">
    <location>
        <begin position="111"/>
        <end position="122"/>
    </location>
</feature>
<comment type="function">
    <text evidence="1">Plays an important role in DNA replication, recombination and repair. Binds to ssDNA and to an array of partner proteins to recruit them to their sites of action during DNA metabolism.</text>
</comment>
<comment type="subunit">
    <text evidence="1">Homotetramer.</text>
</comment>
<name>SSB2_XYLFA</name>
<evidence type="ECO:0000255" key="1">
    <source>
        <dbReference type="HAMAP-Rule" id="MF_00984"/>
    </source>
</evidence>
<evidence type="ECO:0000256" key="2">
    <source>
        <dbReference type="SAM" id="MobiDB-lite"/>
    </source>
</evidence>